<sequence length="326" mass="35964">MSILINNGNDYQLNSSETFNSLKSSPSSTSSLSSISTSSSSSCHKRSKAVDLNRNTSNSQNSSISTAPTTATAANTTPRKTSITIPSKLPSSWIPLRNGNIDYSRYYNTNQEEDNQEQQLQDGEPLSAPTTNNGTTKTATANANIIQDSFETIPCFSSTTNTTITSSRSNPTNSTPTSNDPSFPKQMINWNQFLQEEKDMNDNSSTINDDDKTFYMEQLNLNVGQTPNNNNNNNHGVSETENDLLPGTSKSLIAKYHYQLNYGDENENETNDVREYEYGGGESRKRKSSTTSDDRRPRRGGGGGGSRTSQVFRNTLNKFTFKPKIK</sequence>
<accession>Q59R32</accession>
<accession>A0A1D8PRC6</accession>
<accession>Q3MP01</accession>
<protein>
    <recommendedName>
        <fullName>Virulence factor CaO19.6688</fullName>
    </recommendedName>
</protein>
<keyword id="KW-1185">Reference proteome</keyword>
<keyword id="KW-0843">Virulence</keyword>
<dbReference type="EMBL" id="CP017629">
    <property type="protein sequence ID" value="AOW30698.1"/>
    <property type="molecule type" value="Genomic_DNA"/>
</dbReference>
<dbReference type="RefSeq" id="XP_712141.1">
    <property type="nucleotide sequence ID" value="XM_707048.1"/>
</dbReference>
<dbReference type="STRING" id="237561.Q59R32"/>
<dbReference type="EnsemblFungi" id="C7_03560W_A-T">
    <property type="protein sequence ID" value="C7_03560W_A-T-p1"/>
    <property type="gene ID" value="C7_03560W_A"/>
</dbReference>
<dbReference type="GeneID" id="3646236"/>
<dbReference type="KEGG" id="cal:CAALFM_C703560WA"/>
<dbReference type="CGD" id="CAL0000191640">
    <property type="gene designation" value="orf19.13980"/>
</dbReference>
<dbReference type="VEuPathDB" id="FungiDB:C7_03560W_A"/>
<dbReference type="HOGENOM" id="CLU_882766_0_0_1"/>
<dbReference type="InParanoid" id="Q59R32"/>
<dbReference type="OrthoDB" id="4024167at2759"/>
<dbReference type="PHI-base" id="PHI:4656"/>
<dbReference type="Proteomes" id="UP000000559">
    <property type="component" value="Chromosome 7"/>
</dbReference>
<name>Y6688_CANAL</name>
<evidence type="ECO:0000256" key="1">
    <source>
        <dbReference type="SAM" id="MobiDB-lite"/>
    </source>
</evidence>
<evidence type="ECO:0000269" key="2">
    <source>
    </source>
</evidence>
<evidence type="ECO:0000269" key="3">
    <source>
    </source>
</evidence>
<feature type="chain" id="PRO_0000429118" description="Virulence factor CaO19.6688">
    <location>
        <begin position="1"/>
        <end position="326"/>
    </location>
</feature>
<feature type="region of interest" description="Disordered" evidence="1">
    <location>
        <begin position="19"/>
        <end position="91"/>
    </location>
</feature>
<feature type="region of interest" description="Disordered" evidence="1">
    <location>
        <begin position="112"/>
        <end position="137"/>
    </location>
</feature>
<feature type="region of interest" description="Disordered" evidence="1">
    <location>
        <begin position="161"/>
        <end position="184"/>
    </location>
</feature>
<feature type="region of interest" description="Disordered" evidence="1">
    <location>
        <begin position="222"/>
        <end position="245"/>
    </location>
</feature>
<feature type="region of interest" description="Disordered" evidence="1">
    <location>
        <begin position="276"/>
        <end position="326"/>
    </location>
</feature>
<feature type="compositionally biased region" description="Low complexity" evidence="1">
    <location>
        <begin position="21"/>
        <end position="42"/>
    </location>
</feature>
<feature type="compositionally biased region" description="Low complexity" evidence="1">
    <location>
        <begin position="53"/>
        <end position="78"/>
    </location>
</feature>
<feature type="compositionally biased region" description="Low complexity" evidence="1">
    <location>
        <begin position="117"/>
        <end position="137"/>
    </location>
</feature>
<organism>
    <name type="scientific">Candida albicans (strain SC5314 / ATCC MYA-2876)</name>
    <name type="common">Yeast</name>
    <dbReference type="NCBI Taxonomy" id="237561"/>
    <lineage>
        <taxon>Eukaryota</taxon>
        <taxon>Fungi</taxon>
        <taxon>Dikarya</taxon>
        <taxon>Ascomycota</taxon>
        <taxon>Saccharomycotina</taxon>
        <taxon>Pichiomycetes</taxon>
        <taxon>Debaryomycetaceae</taxon>
        <taxon>Candida/Lodderomyces clade</taxon>
        <taxon>Candida</taxon>
    </lineage>
</organism>
<proteinExistence type="evidence at transcript level"/>
<reference key="1">
    <citation type="journal article" date="2004" name="Proc. Natl. Acad. Sci. U.S.A.">
        <title>The diploid genome sequence of Candida albicans.</title>
        <authorList>
            <person name="Jones T."/>
            <person name="Federspiel N.A."/>
            <person name="Chibana H."/>
            <person name="Dungan J."/>
            <person name="Kalman S."/>
            <person name="Magee B.B."/>
            <person name="Newport G."/>
            <person name="Thorstenson Y.R."/>
            <person name="Agabian N."/>
            <person name="Magee P.T."/>
            <person name="Davis R.W."/>
            <person name="Scherer S."/>
        </authorList>
    </citation>
    <scope>NUCLEOTIDE SEQUENCE [LARGE SCALE GENOMIC DNA]</scope>
    <source>
        <strain>SC5314 / ATCC MYA-2876</strain>
    </source>
</reference>
<reference key="2">
    <citation type="journal article" date="2007" name="Genome Biol.">
        <title>Assembly of the Candida albicans genome into sixteen supercontigs aligned on the eight chromosomes.</title>
        <authorList>
            <person name="van het Hoog M."/>
            <person name="Rast T.J."/>
            <person name="Martchenko M."/>
            <person name="Grindle S."/>
            <person name="Dignard D."/>
            <person name="Hogues H."/>
            <person name="Cuomo C."/>
            <person name="Berriman M."/>
            <person name="Scherer S."/>
            <person name="Magee B.B."/>
            <person name="Whiteway M."/>
            <person name="Chibana H."/>
            <person name="Nantel A."/>
            <person name="Magee P.T."/>
        </authorList>
    </citation>
    <scope>GENOME REANNOTATION</scope>
    <source>
        <strain>SC5314 / ATCC MYA-2876</strain>
    </source>
</reference>
<reference key="3">
    <citation type="journal article" date="2013" name="Genome Biol.">
        <title>Assembly of a phased diploid Candida albicans genome facilitates allele-specific measurements and provides a simple model for repeat and indel structure.</title>
        <authorList>
            <person name="Muzzey D."/>
            <person name="Schwartz K."/>
            <person name="Weissman J.S."/>
            <person name="Sherlock G."/>
        </authorList>
    </citation>
    <scope>NUCLEOTIDE SEQUENCE [LARGE SCALE GENOMIC DNA]</scope>
    <scope>GENOME REANNOTATION</scope>
    <source>
        <strain>SC5314 / ATCC MYA-2876</strain>
    </source>
</reference>
<reference key="4">
    <citation type="journal article" date="2014" name="Eukaryot. Cell">
        <title>Candida albicans specific genes: distinct roles in host-pathogen interactions.</title>
        <authorList>
            <person name="Wilson D."/>
            <person name="Mayer F.L."/>
            <person name="Miramon P."/>
            <person name="Slesiona S."/>
            <person name="Jacobsen I.D."/>
            <person name="Hube B."/>
        </authorList>
    </citation>
    <scope>INDUCTION</scope>
    <scope>DISRUPTION PHENOTYPE</scope>
    <scope>FUNCTION</scope>
</reference>
<reference key="5">
    <citation type="journal article" date="2004" name="Antimicrob. Agents Chemother.">
        <title>Comparison of gene expression profiles of Candida albicans azole-resistant clinical isolates and laboratory strains exposed to drugs inducing multidrug transporters.</title>
        <authorList>
            <person name="Karababa M."/>
            <person name="Coste A.T."/>
            <person name="Rognon B."/>
            <person name="Bille J."/>
            <person name="Sanglard D."/>
        </authorList>
    </citation>
    <scope>INDUCTION</scope>
</reference>
<comment type="function">
    <text evidence="3">Virulence factor involved in pathogen-host interaction. Modulates host pro-inflammatory cytokine interleukin-1 beta (IL1B) expression.</text>
</comment>
<comment type="induction">
    <text evidence="2 3">Expression is induced during infection and decreased by benomyl treatment.</text>
</comment>
<comment type="disruption phenotype">
    <text evidence="3">Leads to strong defects in host cell damage in a model of human oral epithelial cells. Exhibits reduced survival following co-incubation with a human macrophage cell line and causes more severe kidney pathology following intravenous murine infection. Also leads to higher levels of interleukin-1 beta (IL1B), following incubation with murine macrophages.</text>
</comment>
<gene>
    <name type="ordered locus">CAALFM_C703560WA</name>
    <name type="ORF">CaO19.13980</name>
    <name type="ORF">CaO19.6688</name>
</gene>